<evidence type="ECO:0000250" key="1"/>
<evidence type="ECO:0000250" key="2">
    <source>
        <dbReference type="UniProtKB" id="P62825"/>
    </source>
</evidence>
<evidence type="ECO:0000255" key="3">
    <source>
        <dbReference type="PROSITE-ProRule" id="PRU00752"/>
    </source>
</evidence>
<evidence type="ECO:0000305" key="4"/>
<comment type="function">
    <text evidence="1">GTP-binding protein involved in nucleocytoplasmic transport. Required for the import of protein into the nucleus and also for RNA export. Involved in chromatin condensation and control of cell cycle (By similarity).</text>
</comment>
<comment type="subunit">
    <text evidence="2">Found in a nuclear export complex with RanGTP, exportin and pre-miRNA (By similarity).</text>
</comment>
<comment type="subcellular location">
    <subcellularLocation>
        <location evidence="1">Nucleus</location>
    </subcellularLocation>
</comment>
<comment type="similarity">
    <text evidence="3 4">Belongs to the small GTPase superfamily. Ran family.</text>
</comment>
<feature type="chain" id="PRO_0000347207" description="GTP-binding nuclear protein Ran-4">
    <location>
        <begin position="1"/>
        <end position="222"/>
    </location>
</feature>
<feature type="domain" description="Small GTPase Ran-type" evidence="3">
    <location>
        <begin position="10"/>
        <end position="174"/>
    </location>
</feature>
<feature type="region of interest" description="Switch-I" evidence="3">
    <location>
        <begin position="40"/>
        <end position="48"/>
    </location>
</feature>
<feature type="region of interest" description="Switch-II" evidence="3">
    <location>
        <begin position="71"/>
        <end position="87"/>
    </location>
</feature>
<feature type="binding site" evidence="2">
    <location>
        <begin position="21"/>
        <end position="28"/>
    </location>
    <ligand>
        <name>GTP</name>
        <dbReference type="ChEBI" id="CHEBI:37565"/>
    </ligand>
</feature>
<feature type="binding site" evidence="2">
    <location>
        <position position="71"/>
    </location>
    <ligand>
        <name>GTP</name>
        <dbReference type="ChEBI" id="CHEBI:37565"/>
    </ligand>
</feature>
<feature type="binding site" evidence="2">
    <location>
        <begin position="125"/>
        <end position="128"/>
    </location>
    <ligand>
        <name>GTP</name>
        <dbReference type="ChEBI" id="CHEBI:37565"/>
    </ligand>
</feature>
<feature type="binding site" evidence="2">
    <location>
        <begin position="153"/>
        <end position="155"/>
    </location>
    <ligand>
        <name>GTP</name>
        <dbReference type="ChEBI" id="CHEBI:37565"/>
    </ligand>
</feature>
<keyword id="KW-0342">GTP-binding</keyword>
<keyword id="KW-0547">Nucleotide-binding</keyword>
<keyword id="KW-0539">Nucleus</keyword>
<keyword id="KW-0653">Protein transport</keyword>
<keyword id="KW-1185">Reference proteome</keyword>
<keyword id="KW-0813">Transport</keyword>
<gene>
    <name type="primary">RAN4</name>
    <name type="ordered locus">At5g55080</name>
    <name type="ORF">MCO15.3</name>
</gene>
<name>RAN4_ARATH</name>
<reference key="1">
    <citation type="journal article" date="1998" name="DNA Res.">
        <title>Structural analysis of Arabidopsis thaliana chromosome 5. IV. Sequence features of the regions of 1,456,315 bp covered by nineteen physically assigned P1 and TAC clones.</title>
        <authorList>
            <person name="Sato S."/>
            <person name="Kaneko T."/>
            <person name="Kotani H."/>
            <person name="Nakamura Y."/>
            <person name="Asamizu E."/>
            <person name="Miyajima N."/>
            <person name="Tabata S."/>
        </authorList>
    </citation>
    <scope>NUCLEOTIDE SEQUENCE [LARGE SCALE GENOMIC DNA]</scope>
    <source>
        <strain>cv. Columbia</strain>
    </source>
</reference>
<reference key="2">
    <citation type="journal article" date="2017" name="Plant J.">
        <title>Araport11: a complete reannotation of the Arabidopsis thaliana reference genome.</title>
        <authorList>
            <person name="Cheng C.Y."/>
            <person name="Krishnakumar V."/>
            <person name="Chan A.P."/>
            <person name="Thibaud-Nissen F."/>
            <person name="Schobel S."/>
            <person name="Town C.D."/>
        </authorList>
    </citation>
    <scope>GENOME REANNOTATION</scope>
    <source>
        <strain>cv. Columbia</strain>
    </source>
</reference>
<reference key="3">
    <citation type="journal article" date="2003" name="Plant Physiol.">
        <title>Analysis of the small GTPase gene superfamily of Arabidopsis.</title>
        <authorList>
            <person name="Vernoud V."/>
            <person name="Horton A.C."/>
            <person name="Yang Z."/>
            <person name="Nielsen E."/>
        </authorList>
    </citation>
    <scope>GENE FAMILY</scope>
    <scope>NOMENCLATURE</scope>
</reference>
<proteinExistence type="inferred from homology"/>
<sequence>MALPNQQNVDLPTFKLLIVGDGGTGKTTFLKRHLTGEFEHNTEPTLGVDIYPLDFFTNRGKIRFECWDTAGQEKYSGLKDAYYIHGQCAIIMFDVTARHTYMNIDRWYRDLRRVCKNIPIVLCGNKVDVPSRQIKPKHVSYHRKKCLQYYEMSAKNNCNFEKPFLYLARRIAGDAKLSFVESPEAQIDNLDVESLQLLTVEAGTQPLLMTRISFEFNTLSIE</sequence>
<dbReference type="EMBL" id="AB010071">
    <property type="protein sequence ID" value="BAB08577.1"/>
    <property type="molecule type" value="Genomic_DNA"/>
</dbReference>
<dbReference type="EMBL" id="CP002688">
    <property type="protein sequence ID" value="AED96578.1"/>
    <property type="molecule type" value="Genomic_DNA"/>
</dbReference>
<dbReference type="RefSeq" id="NP_200319.1">
    <property type="nucleotide sequence ID" value="NM_124890.1"/>
</dbReference>
<dbReference type="SMR" id="Q9FLQ3"/>
<dbReference type="FunCoup" id="Q9FLQ3">
    <property type="interactions" value="127"/>
</dbReference>
<dbReference type="STRING" id="3702.Q9FLQ3"/>
<dbReference type="PaxDb" id="3702-AT5G55080.1"/>
<dbReference type="ProteomicsDB" id="236211"/>
<dbReference type="EnsemblPlants" id="AT5G55080.1">
    <property type="protein sequence ID" value="AT5G55080.1"/>
    <property type="gene ID" value="AT5G55080"/>
</dbReference>
<dbReference type="GeneID" id="835599"/>
<dbReference type="Gramene" id="AT5G55080.1">
    <property type="protein sequence ID" value="AT5G55080.1"/>
    <property type="gene ID" value="AT5G55080"/>
</dbReference>
<dbReference type="KEGG" id="ath:AT5G55080"/>
<dbReference type="Araport" id="AT5G55080"/>
<dbReference type="TAIR" id="AT5G55080">
    <property type="gene designation" value="RAN4"/>
</dbReference>
<dbReference type="eggNOG" id="KOG0096">
    <property type="taxonomic scope" value="Eukaryota"/>
</dbReference>
<dbReference type="HOGENOM" id="CLU_041217_13_0_1"/>
<dbReference type="InParanoid" id="Q9FLQ3"/>
<dbReference type="OMA" id="RRVCKNI"/>
<dbReference type="PhylomeDB" id="Q9FLQ3"/>
<dbReference type="PRO" id="PR:Q9FLQ3"/>
<dbReference type="Proteomes" id="UP000006548">
    <property type="component" value="Chromosome 5"/>
</dbReference>
<dbReference type="ExpressionAtlas" id="Q9FLQ3">
    <property type="expression patterns" value="baseline and differential"/>
</dbReference>
<dbReference type="GO" id="GO:0005634">
    <property type="term" value="C:nucleus"/>
    <property type="evidence" value="ECO:0007669"/>
    <property type="project" value="UniProtKB-SubCell"/>
</dbReference>
<dbReference type="GO" id="GO:0005525">
    <property type="term" value="F:GTP binding"/>
    <property type="evidence" value="ECO:0007669"/>
    <property type="project" value="UniProtKB-KW"/>
</dbReference>
<dbReference type="GO" id="GO:0003924">
    <property type="term" value="F:GTPase activity"/>
    <property type="evidence" value="ECO:0007669"/>
    <property type="project" value="InterPro"/>
</dbReference>
<dbReference type="GO" id="GO:0006913">
    <property type="term" value="P:nucleocytoplasmic transport"/>
    <property type="evidence" value="ECO:0007669"/>
    <property type="project" value="InterPro"/>
</dbReference>
<dbReference type="GO" id="GO:0015031">
    <property type="term" value="P:protein transport"/>
    <property type="evidence" value="ECO:0007669"/>
    <property type="project" value="UniProtKB-KW"/>
</dbReference>
<dbReference type="CDD" id="cd00877">
    <property type="entry name" value="Ran"/>
    <property type="match status" value="1"/>
</dbReference>
<dbReference type="FunFam" id="3.40.50.300:FF:000369">
    <property type="entry name" value="GTP-binding nuclear protein"/>
    <property type="match status" value="1"/>
</dbReference>
<dbReference type="Gene3D" id="3.40.50.300">
    <property type="entry name" value="P-loop containing nucleotide triphosphate hydrolases"/>
    <property type="match status" value="1"/>
</dbReference>
<dbReference type="InterPro" id="IPR027417">
    <property type="entry name" value="P-loop_NTPase"/>
</dbReference>
<dbReference type="InterPro" id="IPR002041">
    <property type="entry name" value="Ran_GTPase"/>
</dbReference>
<dbReference type="InterPro" id="IPR005225">
    <property type="entry name" value="Small_GTP-bd"/>
</dbReference>
<dbReference type="InterPro" id="IPR001806">
    <property type="entry name" value="Small_GTPase"/>
</dbReference>
<dbReference type="NCBIfam" id="TIGR00231">
    <property type="entry name" value="small_GTP"/>
    <property type="match status" value="1"/>
</dbReference>
<dbReference type="PANTHER" id="PTHR24071:SF26">
    <property type="entry name" value="GTP-BINDING NUCLEAR PROTEIN RAN-4"/>
    <property type="match status" value="1"/>
</dbReference>
<dbReference type="PANTHER" id="PTHR24071">
    <property type="entry name" value="RAN GTPASE"/>
    <property type="match status" value="1"/>
</dbReference>
<dbReference type="Pfam" id="PF00071">
    <property type="entry name" value="Ras"/>
    <property type="match status" value="1"/>
</dbReference>
<dbReference type="PRINTS" id="PR00627">
    <property type="entry name" value="GTPRANTC4"/>
</dbReference>
<dbReference type="SMART" id="SM00175">
    <property type="entry name" value="RAB"/>
    <property type="match status" value="1"/>
</dbReference>
<dbReference type="SMART" id="SM00176">
    <property type="entry name" value="RAN"/>
    <property type="match status" value="1"/>
</dbReference>
<dbReference type="SMART" id="SM00173">
    <property type="entry name" value="RAS"/>
    <property type="match status" value="1"/>
</dbReference>
<dbReference type="SMART" id="SM00174">
    <property type="entry name" value="RHO"/>
    <property type="match status" value="1"/>
</dbReference>
<dbReference type="SUPFAM" id="SSF52540">
    <property type="entry name" value="P-loop containing nucleoside triphosphate hydrolases"/>
    <property type="match status" value="1"/>
</dbReference>
<dbReference type="PROSITE" id="PS51418">
    <property type="entry name" value="RAN"/>
    <property type="match status" value="1"/>
</dbReference>
<protein>
    <recommendedName>
        <fullName>GTP-binding nuclear protein Ran-4</fullName>
    </recommendedName>
    <alternativeName>
        <fullName>Ras-related nuclear protein 4</fullName>
    </alternativeName>
</protein>
<organism>
    <name type="scientific">Arabidopsis thaliana</name>
    <name type="common">Mouse-ear cress</name>
    <dbReference type="NCBI Taxonomy" id="3702"/>
    <lineage>
        <taxon>Eukaryota</taxon>
        <taxon>Viridiplantae</taxon>
        <taxon>Streptophyta</taxon>
        <taxon>Embryophyta</taxon>
        <taxon>Tracheophyta</taxon>
        <taxon>Spermatophyta</taxon>
        <taxon>Magnoliopsida</taxon>
        <taxon>eudicotyledons</taxon>
        <taxon>Gunneridae</taxon>
        <taxon>Pentapetalae</taxon>
        <taxon>rosids</taxon>
        <taxon>malvids</taxon>
        <taxon>Brassicales</taxon>
        <taxon>Brassicaceae</taxon>
        <taxon>Camelineae</taxon>
        <taxon>Arabidopsis</taxon>
    </lineage>
</organism>
<accession>Q9FLQ3</accession>